<sequence length="141" mass="15681">MKGAKSKAETRSTKLSVTKKPAKGAKGAAKDPNKPKRPSSAFFVFMEDFRVTYKEEHPKNKSVAAVGKAGGEKWKSLSDSEKAPYVAKADKRKVEYEKNMKAYNKKLEEGPKEDEESDKSVSEVNDEDDAEDGSEEEEDDD</sequence>
<keyword id="KW-0025">Alternative splicing</keyword>
<keyword id="KW-0963">Cytoplasm</keyword>
<keyword id="KW-0238">DNA-binding</keyword>
<keyword id="KW-0539">Nucleus</keyword>
<keyword id="KW-0597">Phosphoprotein</keyword>
<keyword id="KW-1185">Reference proteome</keyword>
<dbReference type="EMBL" id="Y14073">
    <property type="protein sequence ID" value="CAA74402.1"/>
    <property type="molecule type" value="mRNA"/>
</dbReference>
<dbReference type="EMBL" id="Y09482">
    <property type="protein sequence ID" value="CAA70691.1"/>
    <property type="molecule type" value="mRNA"/>
</dbReference>
<dbReference type="EMBL" id="AC069251">
    <property type="status" value="NOT_ANNOTATED_CDS"/>
    <property type="molecule type" value="Genomic_DNA"/>
</dbReference>
<dbReference type="EMBL" id="CP002684">
    <property type="protein sequence ID" value="AEE30009.1"/>
    <property type="molecule type" value="Genomic_DNA"/>
</dbReference>
<dbReference type="EMBL" id="CP002684">
    <property type="protein sequence ID" value="AEE30010.1"/>
    <property type="molecule type" value="Genomic_DNA"/>
</dbReference>
<dbReference type="EMBL" id="AF411789">
    <property type="protein sequence ID" value="AAL06479.1"/>
    <property type="molecule type" value="mRNA"/>
</dbReference>
<dbReference type="EMBL" id="AY097385">
    <property type="protein sequence ID" value="AAM19901.1"/>
    <property type="molecule type" value="mRNA"/>
</dbReference>
<dbReference type="EMBL" id="AY136309">
    <property type="protein sequence ID" value="AAM96975.1"/>
    <property type="molecule type" value="mRNA"/>
</dbReference>
<dbReference type="EMBL" id="BT000420">
    <property type="protein sequence ID" value="AAN15739.1"/>
    <property type="molecule type" value="mRNA"/>
</dbReference>
<dbReference type="EMBL" id="AY084848">
    <property type="protein sequence ID" value="AAM61413.1"/>
    <property type="molecule type" value="mRNA"/>
</dbReference>
<dbReference type="PIR" id="T51598">
    <property type="entry name" value="T51598"/>
</dbReference>
<dbReference type="RefSeq" id="NP_001031075.1">
    <molecule id="P93047-3"/>
    <property type="nucleotide sequence ID" value="NM_001035998.1"/>
</dbReference>
<dbReference type="RefSeq" id="NP_564124.1">
    <molecule id="P93047-1"/>
    <property type="nucleotide sequence ID" value="NM_101921.4"/>
</dbReference>
<dbReference type="SMR" id="P93047"/>
<dbReference type="BioGRID" id="23898">
    <property type="interactions" value="2"/>
</dbReference>
<dbReference type="FunCoup" id="P93047">
    <property type="interactions" value="2890"/>
</dbReference>
<dbReference type="STRING" id="3702.P93047"/>
<dbReference type="iPTMnet" id="P93047"/>
<dbReference type="PaxDb" id="3702-AT1G20696.2"/>
<dbReference type="ProteomicsDB" id="230229">
    <molecule id="P93047-1"/>
</dbReference>
<dbReference type="EnsemblPlants" id="AT1G20696.1">
    <molecule id="P93047-1"/>
    <property type="protein sequence ID" value="AT1G20696.1"/>
    <property type="gene ID" value="AT1G20696"/>
</dbReference>
<dbReference type="EnsemblPlants" id="AT1G20696.2">
    <molecule id="P93047-3"/>
    <property type="protein sequence ID" value="AT1G20696.2"/>
    <property type="gene ID" value="AT1G20696"/>
</dbReference>
<dbReference type="GeneID" id="838659"/>
<dbReference type="Gramene" id="AT1G20696.1">
    <molecule id="P93047-1"/>
    <property type="protein sequence ID" value="AT1G20696.1"/>
    <property type="gene ID" value="AT1G20696"/>
</dbReference>
<dbReference type="Gramene" id="AT1G20696.2">
    <molecule id="P93047-3"/>
    <property type="protein sequence ID" value="AT1G20696.2"/>
    <property type="gene ID" value="AT1G20696"/>
</dbReference>
<dbReference type="KEGG" id="ath:AT1G20696"/>
<dbReference type="Araport" id="AT1G20696"/>
<dbReference type="TAIR" id="AT1G20696">
    <property type="gene designation" value="HMGB3"/>
</dbReference>
<dbReference type="eggNOG" id="KOG0381">
    <property type="taxonomic scope" value="Eukaryota"/>
</dbReference>
<dbReference type="HOGENOM" id="CLU_082854_1_1_1"/>
<dbReference type="InParanoid" id="P93047"/>
<dbReference type="OMA" id="PLSAYMH"/>
<dbReference type="OrthoDB" id="1919336at2759"/>
<dbReference type="PhylomeDB" id="P93047"/>
<dbReference type="PRO" id="PR:P93047"/>
<dbReference type="Proteomes" id="UP000006548">
    <property type="component" value="Chromosome 1"/>
</dbReference>
<dbReference type="ExpressionAtlas" id="P93047">
    <property type="expression patterns" value="baseline and differential"/>
</dbReference>
<dbReference type="GO" id="GO:0000785">
    <property type="term" value="C:chromatin"/>
    <property type="evidence" value="ECO:0000304"/>
    <property type="project" value="TAIR"/>
</dbReference>
<dbReference type="GO" id="GO:0005829">
    <property type="term" value="C:cytosol"/>
    <property type="evidence" value="ECO:0007669"/>
    <property type="project" value="UniProtKB-SubCell"/>
</dbReference>
<dbReference type="GO" id="GO:0005634">
    <property type="term" value="C:nucleus"/>
    <property type="evidence" value="ECO:0007005"/>
    <property type="project" value="TAIR"/>
</dbReference>
<dbReference type="GO" id="GO:0003682">
    <property type="term" value="F:chromatin binding"/>
    <property type="evidence" value="ECO:0000304"/>
    <property type="project" value="TAIR"/>
</dbReference>
<dbReference type="GO" id="GO:0003677">
    <property type="term" value="F:DNA binding"/>
    <property type="evidence" value="ECO:0000314"/>
    <property type="project" value="TAIR"/>
</dbReference>
<dbReference type="GO" id="GO:0003700">
    <property type="term" value="F:DNA-binding transcription factor activity"/>
    <property type="evidence" value="ECO:0000250"/>
    <property type="project" value="TAIR"/>
</dbReference>
<dbReference type="GO" id="GO:0030527">
    <property type="term" value="F:structural constituent of chromatin"/>
    <property type="evidence" value="ECO:0000304"/>
    <property type="project" value="TAIR"/>
</dbReference>
<dbReference type="GO" id="GO:0006325">
    <property type="term" value="P:chromatin organization"/>
    <property type="evidence" value="ECO:0000304"/>
    <property type="project" value="TAIR"/>
</dbReference>
<dbReference type="CDD" id="cd22005">
    <property type="entry name" value="HMG-box_AtHMGB1-like"/>
    <property type="match status" value="1"/>
</dbReference>
<dbReference type="FunFam" id="1.10.30.10:FF:000044">
    <property type="entry name" value="High mobility group B1"/>
    <property type="match status" value="1"/>
</dbReference>
<dbReference type="Gene3D" id="1.10.30.10">
    <property type="entry name" value="High mobility group box domain"/>
    <property type="match status" value="1"/>
</dbReference>
<dbReference type="InterPro" id="IPR009071">
    <property type="entry name" value="HMG_box_dom"/>
</dbReference>
<dbReference type="InterPro" id="IPR036910">
    <property type="entry name" value="HMG_box_dom_sf"/>
</dbReference>
<dbReference type="InterPro" id="IPR031061">
    <property type="entry name" value="HMGB_plant"/>
</dbReference>
<dbReference type="PANTHER" id="PTHR46261:SF22">
    <property type="entry name" value="HIGH MOBILITY GROUP B PROTEIN 2-RELATED"/>
    <property type="match status" value="1"/>
</dbReference>
<dbReference type="PANTHER" id="PTHR46261">
    <property type="entry name" value="HIGH MOBILITY GROUP B PROTEIN 4-RELATED"/>
    <property type="match status" value="1"/>
</dbReference>
<dbReference type="Pfam" id="PF00505">
    <property type="entry name" value="HMG_box"/>
    <property type="match status" value="1"/>
</dbReference>
<dbReference type="SMART" id="SM00398">
    <property type="entry name" value="HMG"/>
    <property type="match status" value="1"/>
</dbReference>
<dbReference type="SUPFAM" id="SSF47095">
    <property type="entry name" value="HMG-box"/>
    <property type="match status" value="1"/>
</dbReference>
<dbReference type="PROSITE" id="PS50118">
    <property type="entry name" value="HMG_BOX_2"/>
    <property type="match status" value="1"/>
</dbReference>
<reference key="1">
    <citation type="journal article" date="1997" name="Eur. J. Biochem.">
        <title>Variability in Arabidopsis thaliana chromosomal high-mobility-group-1-like proteins.</title>
        <authorList>
            <person name="Stemmer C."/>
            <person name="Ritt C."/>
            <person name="Igloi G.L."/>
            <person name="Grimm R."/>
            <person name="Grasser K.D."/>
        </authorList>
    </citation>
    <scope>NUCLEOTIDE SEQUENCE [MRNA] (ISOFORM 1)</scope>
    <scope>FUNCTION</scope>
    <scope>TISSUE SPECIFICITY</scope>
    <source>
        <tissue>Leaf</tissue>
    </source>
</reference>
<reference key="2">
    <citation type="submission" date="1996-11" db="EMBL/GenBank/DDBJ databases">
        <authorList>
            <person name="Webster C.I."/>
            <person name="Gray J.C."/>
        </authorList>
    </citation>
    <scope>NUCLEOTIDE SEQUENCE [MRNA] (ISOFORM 1)</scope>
    <source>
        <strain>cv. Columbia</strain>
    </source>
</reference>
<reference key="3">
    <citation type="journal article" date="2000" name="Nature">
        <title>Sequence and analysis of chromosome 1 of the plant Arabidopsis thaliana.</title>
        <authorList>
            <person name="Theologis A."/>
            <person name="Ecker J.R."/>
            <person name="Palm C.J."/>
            <person name="Federspiel N.A."/>
            <person name="Kaul S."/>
            <person name="White O."/>
            <person name="Alonso J."/>
            <person name="Altafi H."/>
            <person name="Araujo R."/>
            <person name="Bowman C.L."/>
            <person name="Brooks S.Y."/>
            <person name="Buehler E."/>
            <person name="Chan A."/>
            <person name="Chao Q."/>
            <person name="Chen H."/>
            <person name="Cheuk R.F."/>
            <person name="Chin C.W."/>
            <person name="Chung M.K."/>
            <person name="Conn L."/>
            <person name="Conway A.B."/>
            <person name="Conway A.R."/>
            <person name="Creasy T.H."/>
            <person name="Dewar K."/>
            <person name="Dunn P."/>
            <person name="Etgu P."/>
            <person name="Feldblyum T.V."/>
            <person name="Feng J.-D."/>
            <person name="Fong B."/>
            <person name="Fujii C.Y."/>
            <person name="Gill J.E."/>
            <person name="Goldsmith A.D."/>
            <person name="Haas B."/>
            <person name="Hansen N.F."/>
            <person name="Hughes B."/>
            <person name="Huizar L."/>
            <person name="Hunter J.L."/>
            <person name="Jenkins J."/>
            <person name="Johnson-Hopson C."/>
            <person name="Khan S."/>
            <person name="Khaykin E."/>
            <person name="Kim C.J."/>
            <person name="Koo H.L."/>
            <person name="Kremenetskaia I."/>
            <person name="Kurtz D.B."/>
            <person name="Kwan A."/>
            <person name="Lam B."/>
            <person name="Langin-Hooper S."/>
            <person name="Lee A."/>
            <person name="Lee J.M."/>
            <person name="Lenz C.A."/>
            <person name="Li J.H."/>
            <person name="Li Y.-P."/>
            <person name="Lin X."/>
            <person name="Liu S.X."/>
            <person name="Liu Z.A."/>
            <person name="Luros J.S."/>
            <person name="Maiti R."/>
            <person name="Marziali A."/>
            <person name="Militscher J."/>
            <person name="Miranda M."/>
            <person name="Nguyen M."/>
            <person name="Nierman W.C."/>
            <person name="Osborne B.I."/>
            <person name="Pai G."/>
            <person name="Peterson J."/>
            <person name="Pham P.K."/>
            <person name="Rizzo M."/>
            <person name="Rooney T."/>
            <person name="Rowley D."/>
            <person name="Sakano H."/>
            <person name="Salzberg S.L."/>
            <person name="Schwartz J.R."/>
            <person name="Shinn P."/>
            <person name="Southwick A.M."/>
            <person name="Sun H."/>
            <person name="Tallon L.J."/>
            <person name="Tambunga G."/>
            <person name="Toriumi M.J."/>
            <person name="Town C.D."/>
            <person name="Utterback T."/>
            <person name="Van Aken S."/>
            <person name="Vaysberg M."/>
            <person name="Vysotskaia V.S."/>
            <person name="Walker M."/>
            <person name="Wu D."/>
            <person name="Yu G."/>
            <person name="Fraser C.M."/>
            <person name="Venter J.C."/>
            <person name="Davis R.W."/>
        </authorList>
    </citation>
    <scope>NUCLEOTIDE SEQUENCE [LARGE SCALE GENOMIC DNA]</scope>
    <source>
        <strain>cv. Columbia</strain>
    </source>
</reference>
<reference key="4">
    <citation type="journal article" date="2017" name="Plant J.">
        <title>Araport11: a complete reannotation of the Arabidopsis thaliana reference genome.</title>
        <authorList>
            <person name="Cheng C.Y."/>
            <person name="Krishnakumar V."/>
            <person name="Chan A.P."/>
            <person name="Thibaud-Nissen F."/>
            <person name="Schobel S."/>
            <person name="Town C.D."/>
        </authorList>
    </citation>
    <scope>GENOME REANNOTATION</scope>
    <source>
        <strain>cv. Columbia</strain>
    </source>
</reference>
<reference key="5">
    <citation type="journal article" date="2003" name="Science">
        <title>Empirical analysis of transcriptional activity in the Arabidopsis genome.</title>
        <authorList>
            <person name="Yamada K."/>
            <person name="Lim J."/>
            <person name="Dale J.M."/>
            <person name="Chen H."/>
            <person name="Shinn P."/>
            <person name="Palm C.J."/>
            <person name="Southwick A.M."/>
            <person name="Wu H.C."/>
            <person name="Kim C.J."/>
            <person name="Nguyen M."/>
            <person name="Pham P.K."/>
            <person name="Cheuk R.F."/>
            <person name="Karlin-Newmann G."/>
            <person name="Liu S.X."/>
            <person name="Lam B."/>
            <person name="Sakano H."/>
            <person name="Wu T."/>
            <person name="Yu G."/>
            <person name="Miranda M."/>
            <person name="Quach H.L."/>
            <person name="Tripp M."/>
            <person name="Chang C.H."/>
            <person name="Lee J.M."/>
            <person name="Toriumi M.J."/>
            <person name="Chan M.M."/>
            <person name="Tang C.C."/>
            <person name="Onodera C.S."/>
            <person name="Deng J.M."/>
            <person name="Akiyama K."/>
            <person name="Ansari Y."/>
            <person name="Arakawa T."/>
            <person name="Banh J."/>
            <person name="Banno F."/>
            <person name="Bowser L."/>
            <person name="Brooks S.Y."/>
            <person name="Carninci P."/>
            <person name="Chao Q."/>
            <person name="Choy N."/>
            <person name="Enju A."/>
            <person name="Goldsmith A.D."/>
            <person name="Gurjal M."/>
            <person name="Hansen N.F."/>
            <person name="Hayashizaki Y."/>
            <person name="Johnson-Hopson C."/>
            <person name="Hsuan V.W."/>
            <person name="Iida K."/>
            <person name="Karnes M."/>
            <person name="Khan S."/>
            <person name="Koesema E."/>
            <person name="Ishida J."/>
            <person name="Jiang P.X."/>
            <person name="Jones T."/>
            <person name="Kawai J."/>
            <person name="Kamiya A."/>
            <person name="Meyers C."/>
            <person name="Nakajima M."/>
            <person name="Narusaka M."/>
            <person name="Seki M."/>
            <person name="Sakurai T."/>
            <person name="Satou M."/>
            <person name="Tamse R."/>
            <person name="Vaysberg M."/>
            <person name="Wallender E.K."/>
            <person name="Wong C."/>
            <person name="Yamamura Y."/>
            <person name="Yuan S."/>
            <person name="Shinozaki K."/>
            <person name="Davis R.W."/>
            <person name="Theologis A."/>
            <person name="Ecker J.R."/>
        </authorList>
    </citation>
    <scope>NUCLEOTIDE SEQUENCE [LARGE SCALE MRNA] (ISOFORM 1)</scope>
    <source>
        <strain>cv. Columbia</strain>
    </source>
</reference>
<reference key="6">
    <citation type="submission" date="2002-03" db="EMBL/GenBank/DDBJ databases">
        <title>Full-length cDNA from Arabidopsis thaliana.</title>
        <authorList>
            <person name="Brover V.V."/>
            <person name="Troukhan M.E."/>
            <person name="Alexandrov N.A."/>
            <person name="Lu Y.-P."/>
            <person name="Flavell R.B."/>
            <person name="Feldmann K.A."/>
        </authorList>
    </citation>
    <scope>NUCLEOTIDE SEQUENCE [LARGE SCALE MRNA] (ISOFORM 1)</scope>
</reference>
<reference key="7">
    <citation type="journal article" date="2003" name="Biochemistry">
        <title>Phosphorylation of maize and Arabidopsis HMGB proteins by protein kinase CK2alpha.</title>
        <authorList>
            <person name="Stemmer C."/>
            <person name="Leeming D.J."/>
            <person name="Franssen L."/>
            <person name="Grimm R."/>
            <person name="Grasser K.D."/>
        </authorList>
    </citation>
    <scope>PHOSPHORYLATION</scope>
</reference>
<reference key="8">
    <citation type="journal article" date="2007" name="FEBS Lett.">
        <title>Overlapping expression patterns among the genes encoding Arabidopsis chromosomal high mobility group (HMG) proteins.</title>
        <authorList>
            <person name="Launholt D."/>
            <person name="Groenlund J.T."/>
            <person name="Nielsen H.K."/>
            <person name="Grasser K.D."/>
        </authorList>
    </citation>
    <scope>TISSUE SPECIFICITY</scope>
</reference>
<reference key="9">
    <citation type="journal article" date="2007" name="Plant Cell Physiol.">
        <title>Characterization of transgenic Arabidopsis plants overexpressing high mobility group B proteins under high salinity, drought or cold stress.</title>
        <authorList>
            <person name="Kwak K.J."/>
            <person name="Kim J.Y."/>
            <person name="Kim Y.O."/>
            <person name="Kang H."/>
        </authorList>
    </citation>
    <scope>TISSUE SPECIFICITY</scope>
    <scope>INDUCTION BY COLD; DROUGHT AND SALT</scope>
</reference>
<reference key="10">
    <citation type="journal article" date="2010" name="Biochim. Biophys. Acta">
        <title>The role of chromosomal HMGB proteins in plants.</title>
        <authorList>
            <person name="Pedersen D.S."/>
            <person name="Grasser K.D."/>
        </authorList>
    </citation>
    <scope>REVIEW</scope>
    <scope>SUBCELLULAR LOCATION</scope>
</reference>
<gene>
    <name type="primary">HMGB3</name>
    <name type="synonym">HMG1</name>
    <name type="synonym">HMGB2</name>
    <name type="synonym">HMGBETA2</name>
    <name type="synonym">NFD03</name>
    <name type="synonym">NFD3</name>
    <name type="ordered locus">At1g20696</name>
    <name type="ORF">F2D10</name>
</gene>
<protein>
    <recommendedName>
        <fullName>High mobility group B protein 3</fullName>
    </recommendedName>
    <alternativeName>
        <fullName>High mobility group protein B 2</fullName>
        <shortName>AtHMGbeta2</shortName>
        <shortName>HMG beta 2</shortName>
    </alternativeName>
    <alternativeName>
        <fullName>Nucleosome/chromatin assembly factor group D 03</fullName>
        <shortName>Nucleosome/chromatin assembly factor group D 3</shortName>
    </alternativeName>
</protein>
<organism>
    <name type="scientific">Arabidopsis thaliana</name>
    <name type="common">Mouse-ear cress</name>
    <dbReference type="NCBI Taxonomy" id="3702"/>
    <lineage>
        <taxon>Eukaryota</taxon>
        <taxon>Viridiplantae</taxon>
        <taxon>Streptophyta</taxon>
        <taxon>Embryophyta</taxon>
        <taxon>Tracheophyta</taxon>
        <taxon>Spermatophyta</taxon>
        <taxon>Magnoliopsida</taxon>
        <taxon>eudicotyledons</taxon>
        <taxon>Gunneridae</taxon>
        <taxon>Pentapetalae</taxon>
        <taxon>rosids</taxon>
        <taxon>malvids</taxon>
        <taxon>Brassicales</taxon>
        <taxon>Brassicaceae</taxon>
        <taxon>Camelineae</taxon>
        <taxon>Arabidopsis</taxon>
    </lineage>
</organism>
<proteinExistence type="evidence at protein level"/>
<comment type="function">
    <text evidence="7">Binds preferentially double-stranded DNA.</text>
</comment>
<comment type="subcellular location">
    <subcellularLocation>
        <location evidence="2 6">Nucleus</location>
    </subcellularLocation>
    <subcellularLocation>
        <location evidence="6">Cytoplasm</location>
        <location evidence="6">Cytosol</location>
    </subcellularLocation>
</comment>
<comment type="alternative products">
    <event type="alternative splicing"/>
    <isoform>
        <id>P93047-1</id>
        <name>1</name>
        <sequence type="displayed"/>
    </isoform>
    <isoform>
        <id>P93047-2</id>
        <name>2</name>
        <sequence type="described" ref="VSP_039943"/>
    </isoform>
    <isoform>
        <id>P93047-3</id>
        <name>3</name>
        <sequence type="described" ref="VSP_039942"/>
    </isoform>
</comment>
<comment type="tissue specificity">
    <text evidence="4 5 7">Expressed in lateral roots, root tips, stems, cotyledons, leaves and flowers (excluding ovary and pedicels).</text>
</comment>
<comment type="induction">
    <text evidence="4">Up-regulated by cold stress, but down-regulated by drought and salt stress.</text>
</comment>
<comment type="similarity">
    <text evidence="8">Belongs to the HMGB family.</text>
</comment>
<feature type="chain" id="PRO_0000399929" description="High mobility group B protein 3">
    <location>
        <begin position="1"/>
        <end position="141"/>
    </location>
</feature>
<feature type="DNA-binding region" description="HMG box" evidence="2">
    <location>
        <begin position="35"/>
        <end position="104"/>
    </location>
</feature>
<feature type="region of interest" description="Disordered" evidence="3">
    <location>
        <begin position="1"/>
        <end position="40"/>
    </location>
</feature>
<feature type="region of interest" description="Disordered" evidence="3">
    <location>
        <begin position="54"/>
        <end position="141"/>
    </location>
</feature>
<feature type="compositionally biased region" description="Basic and acidic residues" evidence="3">
    <location>
        <begin position="1"/>
        <end position="12"/>
    </location>
</feature>
<feature type="compositionally biased region" description="Basic and acidic residues" evidence="3">
    <location>
        <begin position="70"/>
        <end position="110"/>
    </location>
</feature>
<feature type="compositionally biased region" description="Acidic residues" evidence="3">
    <location>
        <begin position="124"/>
        <end position="141"/>
    </location>
</feature>
<feature type="modified residue" description="Phosphoserine" evidence="1">
    <location>
        <position position="122"/>
    </location>
</feature>
<feature type="splice variant" id="VSP_039942" description="In isoform 3." evidence="8">
    <original>EEGPKEDEESDKSVSEVNDEDDAEDGSEEEEDDD</original>
    <variation>VIALRKMRNLTSQFQRLTMRMMLRMAVKRRKTMIKKLKLW</variation>
    <location>
        <begin position="108"/>
        <end position="141"/>
    </location>
</feature>
<feature type="splice variant" id="VSP_039943" description="In isoform 2." evidence="8">
    <original>EEDDD</original>
    <variation>VRRR</variation>
    <location>
        <begin position="137"/>
        <end position="141"/>
    </location>
</feature>
<name>HMGB3_ARATH</name>
<evidence type="ECO:0000250" key="1">
    <source>
        <dbReference type="UniProtKB" id="O49595"/>
    </source>
</evidence>
<evidence type="ECO:0000255" key="2">
    <source>
        <dbReference type="PROSITE-ProRule" id="PRU00267"/>
    </source>
</evidence>
<evidence type="ECO:0000256" key="3">
    <source>
        <dbReference type="SAM" id="MobiDB-lite"/>
    </source>
</evidence>
<evidence type="ECO:0000269" key="4">
    <source>
    </source>
</evidence>
<evidence type="ECO:0000269" key="5">
    <source>
    </source>
</evidence>
<evidence type="ECO:0000269" key="6">
    <source>
    </source>
</evidence>
<evidence type="ECO:0000269" key="7">
    <source>
    </source>
</evidence>
<evidence type="ECO:0000305" key="8"/>
<accession>P93047</accession>
<accession>A8MQS4</accession>
<accession>Q2L6T4</accession>